<dbReference type="EMBL" id="CP000254">
    <property type="protein sequence ID" value="ABD40930.1"/>
    <property type="molecule type" value="Genomic_DNA"/>
</dbReference>
<dbReference type="RefSeq" id="WP_011448207.1">
    <property type="nucleotide sequence ID" value="NC_007796.1"/>
</dbReference>
<dbReference type="SMR" id="Q2FP53"/>
<dbReference type="FunCoup" id="Q2FP53">
    <property type="interactions" value="46"/>
</dbReference>
<dbReference type="STRING" id="323259.Mhun_1182"/>
<dbReference type="EnsemblBacteria" id="ABD40930">
    <property type="protein sequence ID" value="ABD40930"/>
    <property type="gene ID" value="Mhun_1182"/>
</dbReference>
<dbReference type="KEGG" id="mhu:Mhun_1182"/>
<dbReference type="eggNOG" id="arCOG04102">
    <property type="taxonomic scope" value="Archaea"/>
</dbReference>
<dbReference type="HOGENOM" id="CLU_135754_2_2_2"/>
<dbReference type="InParanoid" id="Q2FP53"/>
<dbReference type="OrthoDB" id="24971at2157"/>
<dbReference type="Proteomes" id="UP000001941">
    <property type="component" value="Chromosome"/>
</dbReference>
<dbReference type="GO" id="GO:0005886">
    <property type="term" value="C:plasma membrane"/>
    <property type="evidence" value="ECO:0007669"/>
    <property type="project" value="UniProtKB-SubCell"/>
</dbReference>
<dbReference type="GO" id="GO:0005524">
    <property type="term" value="F:ATP binding"/>
    <property type="evidence" value="ECO:0007669"/>
    <property type="project" value="UniProtKB-UniRule"/>
</dbReference>
<dbReference type="GO" id="GO:0046933">
    <property type="term" value="F:proton-transporting ATP synthase activity, rotational mechanism"/>
    <property type="evidence" value="ECO:0007669"/>
    <property type="project" value="UniProtKB-UniRule"/>
</dbReference>
<dbReference type="GO" id="GO:0046961">
    <property type="term" value="F:proton-transporting ATPase activity, rotational mechanism"/>
    <property type="evidence" value="ECO:0007669"/>
    <property type="project" value="InterPro"/>
</dbReference>
<dbReference type="GO" id="GO:0042777">
    <property type="term" value="P:proton motive force-driven plasma membrane ATP synthesis"/>
    <property type="evidence" value="ECO:0007669"/>
    <property type="project" value="UniProtKB-UniRule"/>
</dbReference>
<dbReference type="Gene3D" id="3.40.50.10580">
    <property type="entry name" value="ATPase, V1 complex, subunit F"/>
    <property type="match status" value="1"/>
</dbReference>
<dbReference type="HAMAP" id="MF_00312">
    <property type="entry name" value="ATP_synth_F_arch"/>
    <property type="match status" value="1"/>
</dbReference>
<dbReference type="InterPro" id="IPR008218">
    <property type="entry name" value="ATPase_V1-cplx_f_g_su"/>
</dbReference>
<dbReference type="InterPro" id="IPR022944">
    <property type="entry name" value="ATPase_V1-cplx_fsu_bac/arc"/>
</dbReference>
<dbReference type="InterPro" id="IPR036906">
    <property type="entry name" value="ATPase_V1_fsu_sf"/>
</dbReference>
<dbReference type="NCBIfam" id="NF002577">
    <property type="entry name" value="PRK02228.1"/>
    <property type="match status" value="1"/>
</dbReference>
<dbReference type="Pfam" id="PF01990">
    <property type="entry name" value="ATP-synt_F"/>
    <property type="match status" value="1"/>
</dbReference>
<dbReference type="SUPFAM" id="SSF159468">
    <property type="entry name" value="AtpF-like"/>
    <property type="match status" value="1"/>
</dbReference>
<proteinExistence type="inferred from homology"/>
<protein>
    <recommendedName>
        <fullName evidence="1">A-type ATP synthase subunit F</fullName>
    </recommendedName>
</protein>
<sequence length="100" mass="11056">MEIAVIGNSEFILGFRLAGITKTYAAESDEKVVEYVHKVLDDGKIGILVLNSSDMAKIPVRLRTTLENSVHPTVITLGEEEGGLSMRERIKRSVGVDLWK</sequence>
<gene>
    <name evidence="1" type="primary">atpF</name>
    <name type="ordered locus">Mhun_1182</name>
</gene>
<accession>Q2FP53</accession>
<name>AATF_METHJ</name>
<keyword id="KW-0066">ATP synthesis</keyword>
<keyword id="KW-1003">Cell membrane</keyword>
<keyword id="KW-0375">Hydrogen ion transport</keyword>
<keyword id="KW-0406">Ion transport</keyword>
<keyword id="KW-0472">Membrane</keyword>
<keyword id="KW-1185">Reference proteome</keyword>
<keyword id="KW-0813">Transport</keyword>
<feature type="chain" id="PRO_1000059429" description="A-type ATP synthase subunit F">
    <location>
        <begin position="1"/>
        <end position="100"/>
    </location>
</feature>
<comment type="function">
    <text evidence="1">Component of the A-type ATP synthase that produces ATP from ADP in the presence of a proton gradient across the membrane.</text>
</comment>
<comment type="subunit">
    <text evidence="1">Has multiple subunits with at least A(3), B(3), C, D, E, F, H, I and proteolipid K(x).</text>
</comment>
<comment type="subcellular location">
    <subcellularLocation>
        <location evidence="1">Cell membrane</location>
        <topology evidence="1">Peripheral membrane protein</topology>
    </subcellularLocation>
</comment>
<comment type="similarity">
    <text evidence="1">Belongs to the V-ATPase F subunit family.</text>
</comment>
<reference key="1">
    <citation type="journal article" date="2016" name="Stand. Genomic Sci.">
        <title>Complete genome sequence of Methanospirillum hungatei type strain JF1.</title>
        <authorList>
            <person name="Gunsalus R.P."/>
            <person name="Cook L.E."/>
            <person name="Crable B."/>
            <person name="Rohlin L."/>
            <person name="McDonald E."/>
            <person name="Mouttaki H."/>
            <person name="Sieber J.R."/>
            <person name="Poweleit N."/>
            <person name="Zhou H."/>
            <person name="Lapidus A.L."/>
            <person name="Daligault H.E."/>
            <person name="Land M."/>
            <person name="Gilna P."/>
            <person name="Ivanova N."/>
            <person name="Kyrpides N."/>
            <person name="Culley D.E."/>
            <person name="McInerney M.J."/>
        </authorList>
    </citation>
    <scope>NUCLEOTIDE SEQUENCE [LARGE SCALE GENOMIC DNA]</scope>
    <source>
        <strain>ATCC 27890 / DSM 864 / NBRC 100397 / JF-1</strain>
    </source>
</reference>
<evidence type="ECO:0000255" key="1">
    <source>
        <dbReference type="HAMAP-Rule" id="MF_00312"/>
    </source>
</evidence>
<organism>
    <name type="scientific">Methanospirillum hungatei JF-1 (strain ATCC 27890 / DSM 864 / NBRC 100397 / JF-1)</name>
    <dbReference type="NCBI Taxonomy" id="323259"/>
    <lineage>
        <taxon>Archaea</taxon>
        <taxon>Methanobacteriati</taxon>
        <taxon>Methanobacteriota</taxon>
        <taxon>Stenosarchaea group</taxon>
        <taxon>Methanomicrobia</taxon>
        <taxon>Methanomicrobiales</taxon>
        <taxon>Methanospirillaceae</taxon>
        <taxon>Methanospirillum</taxon>
    </lineage>
</organism>